<keyword id="KW-0997">Cell inner membrane</keyword>
<keyword id="KW-1003">Cell membrane</keyword>
<keyword id="KW-0472">Membrane</keyword>
<keyword id="KW-0769">Symport</keyword>
<keyword id="KW-0812">Transmembrane</keyword>
<keyword id="KW-1133">Transmembrane helix</keyword>
<keyword id="KW-0813">Transport</keyword>
<proteinExistence type="inferred from homology"/>
<gene>
    <name evidence="1" type="primary">dctA</name>
    <name type="ordered locus">BamMC406_2790</name>
</gene>
<organism>
    <name type="scientific">Burkholderia ambifaria (strain MC40-6)</name>
    <dbReference type="NCBI Taxonomy" id="398577"/>
    <lineage>
        <taxon>Bacteria</taxon>
        <taxon>Pseudomonadati</taxon>
        <taxon>Pseudomonadota</taxon>
        <taxon>Betaproteobacteria</taxon>
        <taxon>Burkholderiales</taxon>
        <taxon>Burkholderiaceae</taxon>
        <taxon>Burkholderia</taxon>
        <taxon>Burkholderia cepacia complex</taxon>
    </lineage>
</organism>
<protein>
    <recommendedName>
        <fullName evidence="1">C4-dicarboxylate transport protein</fullName>
    </recommendedName>
</protein>
<evidence type="ECO:0000255" key="1">
    <source>
        <dbReference type="HAMAP-Rule" id="MF_01300"/>
    </source>
</evidence>
<dbReference type="EMBL" id="CP001025">
    <property type="protein sequence ID" value="ACB65267.1"/>
    <property type="molecule type" value="Genomic_DNA"/>
</dbReference>
<dbReference type="RefSeq" id="WP_012364784.1">
    <property type="nucleotide sequence ID" value="NC_010551.1"/>
</dbReference>
<dbReference type="SMR" id="B1YNL7"/>
<dbReference type="KEGG" id="bac:BamMC406_2790"/>
<dbReference type="HOGENOM" id="CLU_019375_7_0_4"/>
<dbReference type="OrthoDB" id="9766690at2"/>
<dbReference type="Proteomes" id="UP000001680">
    <property type="component" value="Chromosome 1"/>
</dbReference>
<dbReference type="GO" id="GO:0005886">
    <property type="term" value="C:plasma membrane"/>
    <property type="evidence" value="ECO:0007669"/>
    <property type="project" value="UniProtKB-SubCell"/>
</dbReference>
<dbReference type="GO" id="GO:0015138">
    <property type="term" value="F:fumarate transmembrane transporter activity"/>
    <property type="evidence" value="ECO:0007669"/>
    <property type="project" value="TreeGrafter"/>
</dbReference>
<dbReference type="GO" id="GO:0015366">
    <property type="term" value="F:malate:proton symporter activity"/>
    <property type="evidence" value="ECO:0007669"/>
    <property type="project" value="TreeGrafter"/>
</dbReference>
<dbReference type="GO" id="GO:0015141">
    <property type="term" value="F:succinate transmembrane transporter activity"/>
    <property type="evidence" value="ECO:0007669"/>
    <property type="project" value="TreeGrafter"/>
</dbReference>
<dbReference type="GO" id="GO:0070778">
    <property type="term" value="P:L-aspartate transmembrane transport"/>
    <property type="evidence" value="ECO:0007669"/>
    <property type="project" value="TreeGrafter"/>
</dbReference>
<dbReference type="FunFam" id="1.10.3860.10:FF:000001">
    <property type="entry name" value="C4-dicarboxylate transport protein"/>
    <property type="match status" value="1"/>
</dbReference>
<dbReference type="Gene3D" id="1.10.3860.10">
    <property type="entry name" value="Sodium:dicarboxylate symporter"/>
    <property type="match status" value="1"/>
</dbReference>
<dbReference type="HAMAP" id="MF_01300">
    <property type="entry name" value="C4_dicarb_transport"/>
    <property type="match status" value="1"/>
</dbReference>
<dbReference type="InterPro" id="IPR023954">
    <property type="entry name" value="C4_dicarb_transport"/>
</dbReference>
<dbReference type="InterPro" id="IPR001991">
    <property type="entry name" value="Na-dicarboxylate_symporter"/>
</dbReference>
<dbReference type="InterPro" id="IPR018107">
    <property type="entry name" value="Na-dicarboxylate_symporter_CS"/>
</dbReference>
<dbReference type="InterPro" id="IPR036458">
    <property type="entry name" value="Na:dicarbo_symporter_sf"/>
</dbReference>
<dbReference type="NCBIfam" id="NF002461">
    <property type="entry name" value="PRK01663.1"/>
    <property type="match status" value="1"/>
</dbReference>
<dbReference type="NCBIfam" id="NF009587">
    <property type="entry name" value="PRK13027.1"/>
    <property type="match status" value="1"/>
</dbReference>
<dbReference type="PANTHER" id="PTHR42865:SF1">
    <property type="entry name" value="AEROBIC C4-DICARBOXYLATE TRANSPORT PROTEIN"/>
    <property type="match status" value="1"/>
</dbReference>
<dbReference type="PANTHER" id="PTHR42865">
    <property type="entry name" value="PROTON/GLUTAMATE-ASPARTATE SYMPORTER"/>
    <property type="match status" value="1"/>
</dbReference>
<dbReference type="Pfam" id="PF00375">
    <property type="entry name" value="SDF"/>
    <property type="match status" value="1"/>
</dbReference>
<dbReference type="PRINTS" id="PR00173">
    <property type="entry name" value="EDTRNSPORT"/>
</dbReference>
<dbReference type="SUPFAM" id="SSF118215">
    <property type="entry name" value="Proton glutamate symport protein"/>
    <property type="match status" value="1"/>
</dbReference>
<dbReference type="PROSITE" id="PS00713">
    <property type="entry name" value="NA_DICARBOXYL_SYMP_1"/>
    <property type="match status" value="1"/>
</dbReference>
<dbReference type="PROSITE" id="PS00714">
    <property type="entry name" value="NA_DICARBOXYL_SYMP_2"/>
    <property type="match status" value="1"/>
</dbReference>
<name>DCTA_BURA4</name>
<comment type="function">
    <text evidence="1">Responsible for the transport of dicarboxylates such as succinate, fumarate, and malate from the periplasm across the membrane.</text>
</comment>
<comment type="subcellular location">
    <subcellularLocation>
        <location evidence="1">Cell inner membrane</location>
        <topology evidence="1">Multi-pass membrane protein</topology>
    </subcellularLocation>
</comment>
<comment type="similarity">
    <text evidence="1">Belongs to the dicarboxylate/amino acid:cation symporter (DAACS) (TC 2.A.23) family.</text>
</comment>
<feature type="chain" id="PRO_1000140444" description="C4-dicarboxylate transport protein">
    <location>
        <begin position="1"/>
        <end position="429"/>
    </location>
</feature>
<feature type="transmembrane region" description="Helical" evidence="1">
    <location>
        <begin position="9"/>
        <end position="29"/>
    </location>
</feature>
<feature type="transmembrane region" description="Helical" evidence="1">
    <location>
        <begin position="45"/>
        <end position="65"/>
    </location>
</feature>
<feature type="transmembrane region" description="Helical" evidence="1">
    <location>
        <begin position="79"/>
        <end position="99"/>
    </location>
</feature>
<feature type="transmembrane region" description="Helical" evidence="1">
    <location>
        <begin position="149"/>
        <end position="169"/>
    </location>
</feature>
<feature type="transmembrane region" description="Helical" evidence="1">
    <location>
        <begin position="185"/>
        <end position="205"/>
    </location>
</feature>
<feature type="transmembrane region" description="Helical" evidence="1">
    <location>
        <begin position="223"/>
        <end position="243"/>
    </location>
</feature>
<feature type="transmembrane region" description="Helical" evidence="1">
    <location>
        <begin position="308"/>
        <end position="328"/>
    </location>
</feature>
<feature type="transmembrane region" description="Helical" evidence="1">
    <location>
        <begin position="356"/>
        <end position="376"/>
    </location>
</feature>
<reference key="1">
    <citation type="submission" date="2008-04" db="EMBL/GenBank/DDBJ databases">
        <title>Complete sequence of chromosome 1 of Burkholderia ambifaria MC40-6.</title>
        <authorList>
            <person name="Copeland A."/>
            <person name="Lucas S."/>
            <person name="Lapidus A."/>
            <person name="Glavina del Rio T."/>
            <person name="Dalin E."/>
            <person name="Tice H."/>
            <person name="Pitluck S."/>
            <person name="Chain P."/>
            <person name="Malfatti S."/>
            <person name="Shin M."/>
            <person name="Vergez L."/>
            <person name="Lang D."/>
            <person name="Schmutz J."/>
            <person name="Larimer F."/>
            <person name="Land M."/>
            <person name="Hauser L."/>
            <person name="Kyrpides N."/>
            <person name="Lykidis A."/>
            <person name="Ramette A."/>
            <person name="Konstantinidis K."/>
            <person name="Tiedje J."/>
            <person name="Richardson P."/>
        </authorList>
    </citation>
    <scope>NUCLEOTIDE SEQUENCE [LARGE SCALE GENOMIC DNA]</scope>
    <source>
        <strain>MC40-6</strain>
    </source>
</reference>
<accession>B1YNL7</accession>
<sequence>MKKKPFYKVLYVQVIFAIIVGVILGHFYPALATDMKPLGDGFIKLIKMVIGPIIFCTVVTGIAGMEDMKKVGRVGGKALLYFEVVSTFALLLGLAATHILRPGVGFNIDPATLDGKAVASYAAKAHGQSTVDFLLHIIPNTMVDAFAQGEILQILLIALLFGSVLAHLGERGKVVTDFIDGLTRVLFGIVHIVTKLAPIGAFGAMAFTIGKYGVGSLVPLLKLIGTFYLTSIVFVLVVLGTIARVTGFSIIRFVSYIKEELLIVLGTSSSEAALPQLMEKLEKAGCSRSVVGLVVPTGYSFNLDGTNIYMTMAVLFIAQATNIELTWMQQLTLLAVAMLTSKGASGVTGAGFITLAATLAVVPTIPLSGMVLILGIDRFMSECRALTNIVGNGVATVVVSAWEKELDRNKLRQALAGGGEVKTTEAAGV</sequence>